<evidence type="ECO:0000255" key="1">
    <source>
        <dbReference type="HAMAP-Rule" id="MF_00003"/>
    </source>
</evidence>
<sequence length="113" mass="12924">MAELRAHRIAEQMKKELGEILSRKIKDPRVGFVTVTDVEVTGDLQQAKVYISVLGDEKKKQDTLLGLSKAKGFIRSEIGNRIRLRKTPEITFEFDEALEQGNRIETILRDLNK</sequence>
<name>RBFA_OCEIH</name>
<gene>
    <name evidence="1" type="primary">rbfA</name>
    <name type="ordered locus">OB1600</name>
</gene>
<feature type="chain" id="PRO_0000102705" description="Ribosome-binding factor A">
    <location>
        <begin position="1"/>
        <end position="113"/>
    </location>
</feature>
<dbReference type="EMBL" id="BA000028">
    <property type="protein sequence ID" value="BAC13556.1"/>
    <property type="molecule type" value="Genomic_DNA"/>
</dbReference>
<dbReference type="RefSeq" id="WP_011066000.1">
    <property type="nucleotide sequence ID" value="NC_004193.1"/>
</dbReference>
<dbReference type="SMR" id="Q8EQT9"/>
<dbReference type="STRING" id="221109.gene:10733840"/>
<dbReference type="KEGG" id="oih:OB1600"/>
<dbReference type="eggNOG" id="COG0858">
    <property type="taxonomic scope" value="Bacteria"/>
</dbReference>
<dbReference type="HOGENOM" id="CLU_089475_6_3_9"/>
<dbReference type="OrthoDB" id="307788at2"/>
<dbReference type="PhylomeDB" id="Q8EQT9"/>
<dbReference type="Proteomes" id="UP000000822">
    <property type="component" value="Chromosome"/>
</dbReference>
<dbReference type="GO" id="GO:0005829">
    <property type="term" value="C:cytosol"/>
    <property type="evidence" value="ECO:0007669"/>
    <property type="project" value="TreeGrafter"/>
</dbReference>
<dbReference type="GO" id="GO:0043024">
    <property type="term" value="F:ribosomal small subunit binding"/>
    <property type="evidence" value="ECO:0007669"/>
    <property type="project" value="TreeGrafter"/>
</dbReference>
<dbReference type="GO" id="GO:0030490">
    <property type="term" value="P:maturation of SSU-rRNA"/>
    <property type="evidence" value="ECO:0007669"/>
    <property type="project" value="UniProtKB-UniRule"/>
</dbReference>
<dbReference type="FunFam" id="3.30.300.20:FF:000009">
    <property type="entry name" value="Ribosome-binding factor A"/>
    <property type="match status" value="1"/>
</dbReference>
<dbReference type="Gene3D" id="3.30.300.20">
    <property type="match status" value="1"/>
</dbReference>
<dbReference type="HAMAP" id="MF_00003">
    <property type="entry name" value="RbfA"/>
    <property type="match status" value="1"/>
</dbReference>
<dbReference type="InterPro" id="IPR015946">
    <property type="entry name" value="KH_dom-like_a/b"/>
</dbReference>
<dbReference type="InterPro" id="IPR000238">
    <property type="entry name" value="RbfA"/>
</dbReference>
<dbReference type="InterPro" id="IPR023799">
    <property type="entry name" value="RbfA_dom_sf"/>
</dbReference>
<dbReference type="InterPro" id="IPR020053">
    <property type="entry name" value="Ribosome-bd_factorA_CS"/>
</dbReference>
<dbReference type="NCBIfam" id="TIGR00082">
    <property type="entry name" value="rbfA"/>
    <property type="match status" value="1"/>
</dbReference>
<dbReference type="PANTHER" id="PTHR33515">
    <property type="entry name" value="RIBOSOME-BINDING FACTOR A, CHLOROPLASTIC-RELATED"/>
    <property type="match status" value="1"/>
</dbReference>
<dbReference type="PANTHER" id="PTHR33515:SF1">
    <property type="entry name" value="RIBOSOME-BINDING FACTOR A, CHLOROPLASTIC-RELATED"/>
    <property type="match status" value="1"/>
</dbReference>
<dbReference type="Pfam" id="PF02033">
    <property type="entry name" value="RBFA"/>
    <property type="match status" value="1"/>
</dbReference>
<dbReference type="SUPFAM" id="SSF89919">
    <property type="entry name" value="Ribosome-binding factor A, RbfA"/>
    <property type="match status" value="1"/>
</dbReference>
<dbReference type="PROSITE" id="PS01319">
    <property type="entry name" value="RBFA"/>
    <property type="match status" value="1"/>
</dbReference>
<keyword id="KW-0963">Cytoplasm</keyword>
<keyword id="KW-1185">Reference proteome</keyword>
<keyword id="KW-0690">Ribosome biogenesis</keyword>
<accession>Q8EQT9</accession>
<proteinExistence type="inferred from homology"/>
<organism>
    <name type="scientific">Oceanobacillus iheyensis (strain DSM 14371 / CIP 107618 / JCM 11309 / KCTC 3954 / HTE831)</name>
    <dbReference type="NCBI Taxonomy" id="221109"/>
    <lineage>
        <taxon>Bacteria</taxon>
        <taxon>Bacillati</taxon>
        <taxon>Bacillota</taxon>
        <taxon>Bacilli</taxon>
        <taxon>Bacillales</taxon>
        <taxon>Bacillaceae</taxon>
        <taxon>Oceanobacillus</taxon>
    </lineage>
</organism>
<protein>
    <recommendedName>
        <fullName evidence="1">Ribosome-binding factor A</fullName>
    </recommendedName>
</protein>
<comment type="function">
    <text evidence="1">One of several proteins that assist in the late maturation steps of the functional core of the 30S ribosomal subunit. Associates with free 30S ribosomal subunits (but not with 30S subunits that are part of 70S ribosomes or polysomes). Required for efficient processing of 16S rRNA. May interact with the 5'-terminal helix region of 16S rRNA.</text>
</comment>
<comment type="subunit">
    <text evidence="1">Monomer. Binds 30S ribosomal subunits, but not 50S ribosomal subunits or 70S ribosomes.</text>
</comment>
<comment type="subcellular location">
    <subcellularLocation>
        <location evidence="1">Cytoplasm</location>
    </subcellularLocation>
</comment>
<comment type="similarity">
    <text evidence="1">Belongs to the RbfA family.</text>
</comment>
<reference key="1">
    <citation type="journal article" date="2002" name="Nucleic Acids Res.">
        <title>Genome sequence of Oceanobacillus iheyensis isolated from the Iheya Ridge and its unexpected adaptive capabilities to extreme environments.</title>
        <authorList>
            <person name="Takami H."/>
            <person name="Takaki Y."/>
            <person name="Uchiyama I."/>
        </authorList>
    </citation>
    <scope>NUCLEOTIDE SEQUENCE [LARGE SCALE GENOMIC DNA]</scope>
    <source>
        <strain>DSM 14371 / CIP 107618 / JCM 11309 / KCTC 3954 / HTE831</strain>
    </source>
</reference>